<comment type="function">
    <text evidence="1">Catalyzes the formation of acetyl phosphate from acetate and ATP. Can also catalyze the reverse reaction.</text>
</comment>
<comment type="catalytic activity">
    <reaction evidence="1">
        <text>acetate + ATP = acetyl phosphate + ADP</text>
        <dbReference type="Rhea" id="RHEA:11352"/>
        <dbReference type="ChEBI" id="CHEBI:22191"/>
        <dbReference type="ChEBI" id="CHEBI:30089"/>
        <dbReference type="ChEBI" id="CHEBI:30616"/>
        <dbReference type="ChEBI" id="CHEBI:456216"/>
        <dbReference type="EC" id="2.7.2.1"/>
    </reaction>
</comment>
<comment type="cofactor">
    <cofactor evidence="1">
        <name>Mg(2+)</name>
        <dbReference type="ChEBI" id="CHEBI:18420"/>
    </cofactor>
    <cofactor evidence="1">
        <name>Mn(2+)</name>
        <dbReference type="ChEBI" id="CHEBI:29035"/>
    </cofactor>
    <text evidence="1">Mg(2+). Can also accept Mn(2+).</text>
</comment>
<comment type="pathway">
    <text evidence="1">Metabolic intermediate biosynthesis; acetyl-CoA biosynthesis; acetyl-CoA from acetate: step 1/2.</text>
</comment>
<comment type="subunit">
    <text evidence="1">Homodimer.</text>
</comment>
<comment type="subcellular location">
    <subcellularLocation>
        <location evidence="1">Cytoplasm</location>
    </subcellularLocation>
</comment>
<comment type="similarity">
    <text evidence="1">Belongs to the acetokinase family.</text>
</comment>
<reference key="1">
    <citation type="journal article" date="2008" name="J. Bacteriol.">
        <title>Genome of the actinomycete plant pathogen Clavibacter michiganensis subsp. sepedonicus suggests recent niche adaptation.</title>
        <authorList>
            <person name="Bentley S.D."/>
            <person name="Corton C."/>
            <person name="Brown S.E."/>
            <person name="Barron A."/>
            <person name="Clark L."/>
            <person name="Doggett J."/>
            <person name="Harris B."/>
            <person name="Ormond D."/>
            <person name="Quail M.A."/>
            <person name="May G."/>
            <person name="Francis D."/>
            <person name="Knudson D."/>
            <person name="Parkhill J."/>
            <person name="Ishimaru C.A."/>
        </authorList>
    </citation>
    <scope>NUCLEOTIDE SEQUENCE [LARGE SCALE GENOMIC DNA]</scope>
    <source>
        <strain>ATCC 33113 / DSM 20744 / JCM 9667 / LMG 2889 / ICMP 2535 / C-1</strain>
    </source>
</reference>
<accession>B0RIG4</accession>
<protein>
    <recommendedName>
        <fullName evidence="1">Acetate kinase</fullName>
        <ecNumber evidence="1">2.7.2.1</ecNumber>
    </recommendedName>
    <alternativeName>
        <fullName evidence="1">Acetokinase</fullName>
    </alternativeName>
</protein>
<sequence length="396" mass="42037">MPVVLVVNSGSSSFKYQLIEMDTETVLASGLVERIGEEVGSTRHKAGGDSWERELPIADHTAGFQAMLDAFADHGPSLEEGPPVAIGHRVVHGGDVFVEPTVVTEKVKADIDDLSALAPLHNPGALQGIQAAQTAFPDVAHVAVFDTAFHQTLPAEAYTYAIDRELAAAHRIRRYGFHGTSHKYVSEAAARLLGKPLEETRIIVLHLGNGASAAAVQGGRSIDTSMGLTPLEGLVMGTRSGDIDPAILFHLARHTDLGLDDLETLLNRKSGLLGLTGLGDMRDVQRAAADGDEDAQTALGVYRHRIRHYVGAYAAQLGGVDAVVFTAGVGENNPLVRRRSLAGLEFMGIGIDDDRNELISSEARFVSPDGSPVAVLVIPTDEELEIARQSLAATGN</sequence>
<organism>
    <name type="scientific">Clavibacter sepedonicus</name>
    <name type="common">Clavibacter michiganensis subsp. sepedonicus</name>
    <dbReference type="NCBI Taxonomy" id="31964"/>
    <lineage>
        <taxon>Bacteria</taxon>
        <taxon>Bacillati</taxon>
        <taxon>Actinomycetota</taxon>
        <taxon>Actinomycetes</taxon>
        <taxon>Micrococcales</taxon>
        <taxon>Microbacteriaceae</taxon>
        <taxon>Clavibacter</taxon>
    </lineage>
</organism>
<feature type="chain" id="PRO_1000074182" description="Acetate kinase">
    <location>
        <begin position="1"/>
        <end position="396"/>
    </location>
</feature>
<feature type="active site" description="Proton donor/acceptor" evidence="1">
    <location>
        <position position="146"/>
    </location>
</feature>
<feature type="binding site" evidence="1">
    <location>
        <position position="8"/>
    </location>
    <ligand>
        <name>Mg(2+)</name>
        <dbReference type="ChEBI" id="CHEBI:18420"/>
    </ligand>
</feature>
<feature type="binding site" evidence="1">
    <location>
        <position position="15"/>
    </location>
    <ligand>
        <name>ATP</name>
        <dbReference type="ChEBI" id="CHEBI:30616"/>
    </ligand>
</feature>
<feature type="binding site" evidence="1">
    <location>
        <position position="89"/>
    </location>
    <ligand>
        <name>substrate</name>
    </ligand>
</feature>
<feature type="binding site" evidence="1">
    <location>
        <begin position="206"/>
        <end position="210"/>
    </location>
    <ligand>
        <name>ATP</name>
        <dbReference type="ChEBI" id="CHEBI:30616"/>
    </ligand>
</feature>
<feature type="binding site" evidence="1">
    <location>
        <begin position="280"/>
        <end position="282"/>
    </location>
    <ligand>
        <name>ATP</name>
        <dbReference type="ChEBI" id="CHEBI:30616"/>
    </ligand>
</feature>
<feature type="binding site" evidence="1">
    <location>
        <begin position="328"/>
        <end position="332"/>
    </location>
    <ligand>
        <name>ATP</name>
        <dbReference type="ChEBI" id="CHEBI:30616"/>
    </ligand>
</feature>
<feature type="binding site" evidence="1">
    <location>
        <position position="382"/>
    </location>
    <ligand>
        <name>Mg(2+)</name>
        <dbReference type="ChEBI" id="CHEBI:18420"/>
    </ligand>
</feature>
<feature type="site" description="Transition state stabilizer" evidence="1">
    <location>
        <position position="178"/>
    </location>
</feature>
<feature type="site" description="Transition state stabilizer" evidence="1">
    <location>
        <position position="239"/>
    </location>
</feature>
<proteinExistence type="inferred from homology"/>
<name>ACKA_CLASE</name>
<dbReference type="EC" id="2.7.2.1" evidence="1"/>
<dbReference type="EMBL" id="AM849034">
    <property type="protein sequence ID" value="CAQ00278.1"/>
    <property type="molecule type" value="Genomic_DNA"/>
</dbReference>
<dbReference type="RefSeq" id="WP_012297635.1">
    <property type="nucleotide sequence ID" value="NZ_MZMN01000003.1"/>
</dbReference>
<dbReference type="SMR" id="B0RIG4"/>
<dbReference type="STRING" id="31964.CMS0154"/>
<dbReference type="KEGG" id="cms:CMS0154"/>
<dbReference type="eggNOG" id="COG0282">
    <property type="taxonomic scope" value="Bacteria"/>
</dbReference>
<dbReference type="HOGENOM" id="CLU_020352_0_1_11"/>
<dbReference type="OrthoDB" id="9802453at2"/>
<dbReference type="UniPathway" id="UPA00340">
    <property type="reaction ID" value="UER00458"/>
</dbReference>
<dbReference type="Proteomes" id="UP000001318">
    <property type="component" value="Chromosome"/>
</dbReference>
<dbReference type="GO" id="GO:0005737">
    <property type="term" value="C:cytoplasm"/>
    <property type="evidence" value="ECO:0007669"/>
    <property type="project" value="UniProtKB-SubCell"/>
</dbReference>
<dbReference type="GO" id="GO:0008776">
    <property type="term" value="F:acetate kinase activity"/>
    <property type="evidence" value="ECO:0007669"/>
    <property type="project" value="UniProtKB-UniRule"/>
</dbReference>
<dbReference type="GO" id="GO:0005524">
    <property type="term" value="F:ATP binding"/>
    <property type="evidence" value="ECO:0007669"/>
    <property type="project" value="UniProtKB-KW"/>
</dbReference>
<dbReference type="GO" id="GO:0000287">
    <property type="term" value="F:magnesium ion binding"/>
    <property type="evidence" value="ECO:0007669"/>
    <property type="project" value="UniProtKB-UniRule"/>
</dbReference>
<dbReference type="GO" id="GO:0006083">
    <property type="term" value="P:acetate metabolic process"/>
    <property type="evidence" value="ECO:0007669"/>
    <property type="project" value="TreeGrafter"/>
</dbReference>
<dbReference type="GO" id="GO:0006085">
    <property type="term" value="P:acetyl-CoA biosynthetic process"/>
    <property type="evidence" value="ECO:0007669"/>
    <property type="project" value="UniProtKB-UniRule"/>
</dbReference>
<dbReference type="CDD" id="cd24010">
    <property type="entry name" value="ASKHA_NBD_AcK_PK"/>
    <property type="match status" value="1"/>
</dbReference>
<dbReference type="Gene3D" id="3.30.420.40">
    <property type="match status" value="2"/>
</dbReference>
<dbReference type="HAMAP" id="MF_00020">
    <property type="entry name" value="Acetate_kinase"/>
    <property type="match status" value="1"/>
</dbReference>
<dbReference type="InterPro" id="IPR004372">
    <property type="entry name" value="Ac/propionate_kinase"/>
</dbReference>
<dbReference type="InterPro" id="IPR000890">
    <property type="entry name" value="Aliphatic_acid_kin_short-chain"/>
</dbReference>
<dbReference type="InterPro" id="IPR023865">
    <property type="entry name" value="Aliphatic_acid_kinase_CS"/>
</dbReference>
<dbReference type="InterPro" id="IPR043129">
    <property type="entry name" value="ATPase_NBD"/>
</dbReference>
<dbReference type="NCBIfam" id="TIGR00016">
    <property type="entry name" value="ackA"/>
    <property type="match status" value="1"/>
</dbReference>
<dbReference type="PANTHER" id="PTHR21060">
    <property type="entry name" value="ACETATE KINASE"/>
    <property type="match status" value="1"/>
</dbReference>
<dbReference type="PANTHER" id="PTHR21060:SF15">
    <property type="entry name" value="ACETATE KINASE-RELATED"/>
    <property type="match status" value="1"/>
</dbReference>
<dbReference type="Pfam" id="PF00871">
    <property type="entry name" value="Acetate_kinase"/>
    <property type="match status" value="1"/>
</dbReference>
<dbReference type="PIRSF" id="PIRSF000722">
    <property type="entry name" value="Acetate_prop_kin"/>
    <property type="match status" value="1"/>
</dbReference>
<dbReference type="PRINTS" id="PR00471">
    <property type="entry name" value="ACETATEKNASE"/>
</dbReference>
<dbReference type="SUPFAM" id="SSF53067">
    <property type="entry name" value="Actin-like ATPase domain"/>
    <property type="match status" value="2"/>
</dbReference>
<dbReference type="PROSITE" id="PS01075">
    <property type="entry name" value="ACETATE_KINASE_1"/>
    <property type="match status" value="1"/>
</dbReference>
<dbReference type="PROSITE" id="PS01076">
    <property type="entry name" value="ACETATE_KINASE_2"/>
    <property type="match status" value="1"/>
</dbReference>
<gene>
    <name evidence="1" type="primary">ackA</name>
    <name type="ordered locus">CMS0154</name>
</gene>
<keyword id="KW-0067">ATP-binding</keyword>
<keyword id="KW-0963">Cytoplasm</keyword>
<keyword id="KW-0418">Kinase</keyword>
<keyword id="KW-0460">Magnesium</keyword>
<keyword id="KW-0479">Metal-binding</keyword>
<keyword id="KW-0547">Nucleotide-binding</keyword>
<keyword id="KW-0808">Transferase</keyword>
<evidence type="ECO:0000255" key="1">
    <source>
        <dbReference type="HAMAP-Rule" id="MF_00020"/>
    </source>
</evidence>